<organism>
    <name type="scientific">Arabidopsis thaliana</name>
    <name type="common">Mouse-ear cress</name>
    <dbReference type="NCBI Taxonomy" id="3702"/>
    <lineage>
        <taxon>Eukaryota</taxon>
        <taxon>Viridiplantae</taxon>
        <taxon>Streptophyta</taxon>
        <taxon>Embryophyta</taxon>
        <taxon>Tracheophyta</taxon>
        <taxon>Spermatophyta</taxon>
        <taxon>Magnoliopsida</taxon>
        <taxon>eudicotyledons</taxon>
        <taxon>Gunneridae</taxon>
        <taxon>Pentapetalae</taxon>
        <taxon>rosids</taxon>
        <taxon>malvids</taxon>
        <taxon>Brassicales</taxon>
        <taxon>Brassicaceae</taxon>
        <taxon>Camelineae</taxon>
        <taxon>Arabidopsis</taxon>
    </lineage>
</organism>
<proteinExistence type="evidence at protein level"/>
<dbReference type="EMBL" id="AL360314">
    <property type="protein sequence ID" value="CAB96676.1"/>
    <property type="molecule type" value="Genomic_DNA"/>
</dbReference>
<dbReference type="EMBL" id="CP002688">
    <property type="protein sequence ID" value="AED91674.1"/>
    <property type="molecule type" value="Genomic_DNA"/>
</dbReference>
<dbReference type="RefSeq" id="NP_196702.1">
    <property type="nucleotide sequence ID" value="NM_121179.2"/>
</dbReference>
<dbReference type="SMR" id="Q9LFL6"/>
<dbReference type="FunCoup" id="Q9LFL6">
    <property type="interactions" value="2"/>
</dbReference>
<dbReference type="STRING" id="3702.Q9LFL6"/>
<dbReference type="iPTMnet" id="Q9LFL6"/>
<dbReference type="PaxDb" id="3702-AT5G11410.1"/>
<dbReference type="EnsemblPlants" id="AT5G11410.1">
    <property type="protein sequence ID" value="AT5G11410.1"/>
    <property type="gene ID" value="AT5G11410"/>
</dbReference>
<dbReference type="GeneID" id="831012"/>
<dbReference type="Gramene" id="AT5G11410.1">
    <property type="protein sequence ID" value="AT5G11410.1"/>
    <property type="gene ID" value="AT5G11410"/>
</dbReference>
<dbReference type="KEGG" id="ath:AT5G11410"/>
<dbReference type="Araport" id="AT5G11410"/>
<dbReference type="TAIR" id="AT5G11410">
    <property type="gene designation" value="SZE2"/>
</dbReference>
<dbReference type="eggNOG" id="KOG1187">
    <property type="taxonomic scope" value="Eukaryota"/>
</dbReference>
<dbReference type="HOGENOM" id="CLU_000288_21_1_1"/>
<dbReference type="InParanoid" id="Q9LFL6"/>
<dbReference type="OMA" id="ECYQDNS"/>
<dbReference type="OrthoDB" id="4062651at2759"/>
<dbReference type="PRO" id="PR:Q9LFL6"/>
<dbReference type="Proteomes" id="UP000006548">
    <property type="component" value="Chromosome 5"/>
</dbReference>
<dbReference type="ExpressionAtlas" id="Q9LFL6">
    <property type="expression patterns" value="baseline and differential"/>
</dbReference>
<dbReference type="GO" id="GO:0005634">
    <property type="term" value="C:nucleus"/>
    <property type="evidence" value="ECO:0000314"/>
    <property type="project" value="TAIR"/>
</dbReference>
<dbReference type="GO" id="GO:0005886">
    <property type="term" value="C:plasma membrane"/>
    <property type="evidence" value="ECO:0000314"/>
    <property type="project" value="UniProtKB"/>
</dbReference>
<dbReference type="GO" id="GO:0005524">
    <property type="term" value="F:ATP binding"/>
    <property type="evidence" value="ECO:0007669"/>
    <property type="project" value="InterPro"/>
</dbReference>
<dbReference type="GO" id="GO:0004674">
    <property type="term" value="F:protein serine/threonine kinase activity"/>
    <property type="evidence" value="ECO:0007669"/>
    <property type="project" value="UniProtKB-KW"/>
</dbReference>
<dbReference type="GO" id="GO:0006952">
    <property type="term" value="P:defense response"/>
    <property type="evidence" value="ECO:0007669"/>
    <property type="project" value="UniProtKB-KW"/>
</dbReference>
<dbReference type="GO" id="GO:0140301">
    <property type="term" value="P:pollen-stigma interaction"/>
    <property type="evidence" value="ECO:0000316"/>
    <property type="project" value="TAIR"/>
</dbReference>
<dbReference type="Gene3D" id="3.30.200.20">
    <property type="entry name" value="Phosphorylase Kinase, domain 1"/>
    <property type="match status" value="1"/>
</dbReference>
<dbReference type="Gene3D" id="1.10.510.10">
    <property type="entry name" value="Transferase(Phosphotransferase) domain 1"/>
    <property type="match status" value="1"/>
</dbReference>
<dbReference type="InterPro" id="IPR011009">
    <property type="entry name" value="Kinase-like_dom_sf"/>
</dbReference>
<dbReference type="InterPro" id="IPR050823">
    <property type="entry name" value="Plant_Ser_Thr_Prot_Kinase"/>
</dbReference>
<dbReference type="InterPro" id="IPR000719">
    <property type="entry name" value="Prot_kinase_dom"/>
</dbReference>
<dbReference type="PANTHER" id="PTHR45621">
    <property type="entry name" value="OS01G0588500 PROTEIN-RELATED"/>
    <property type="match status" value="1"/>
</dbReference>
<dbReference type="Pfam" id="PF00069">
    <property type="entry name" value="Pkinase"/>
    <property type="match status" value="1"/>
</dbReference>
<dbReference type="SUPFAM" id="SSF56112">
    <property type="entry name" value="Protein kinase-like (PK-like)"/>
    <property type="match status" value="1"/>
</dbReference>
<dbReference type="PROSITE" id="PS50011">
    <property type="entry name" value="PROTEIN_KINASE_DOM"/>
    <property type="match status" value="1"/>
</dbReference>
<feature type="initiator methionine" description="Removed" evidence="3 4">
    <location>
        <position position="1"/>
    </location>
</feature>
<feature type="chain" id="PRO_0000457802" description="Inactive serine/threonine-protein kinase BKN2">
    <location>
        <begin position="2"/>
        <end position="336"/>
    </location>
</feature>
<feature type="domain" description="Protein kinase" evidence="1">
    <location>
        <begin position="52"/>
        <end position="332"/>
    </location>
</feature>
<feature type="region of interest" description="Disordered" evidence="2">
    <location>
        <begin position="1"/>
        <end position="25"/>
    </location>
</feature>
<feature type="lipid moiety-binding region" description="N-myristoyl glycine" evidence="3 4">
    <location>
        <position position="2"/>
    </location>
</feature>
<feature type="lipid moiety-binding region" description="S-palmitoyl cysteine" evidence="4">
    <location>
        <position position="4"/>
    </location>
</feature>
<feature type="mutagenesis site" description="Abolished N-terminal myristoylation leading to disrupted plasma membrane localization and inhability to suppress zed1-D-activated immunity." evidence="3 4">
    <original>G</original>
    <variation>A</variation>
    <location>
        <position position="2"/>
    </location>
</feature>
<feature type="mutagenesis site" description="Disrupted plasma membrane localization." evidence="4">
    <original>C</original>
    <variation>A</variation>
    <location>
        <position position="4"/>
    </location>
</feature>
<keyword id="KW-1003">Cell membrane</keyword>
<keyword id="KW-0418">Kinase</keyword>
<keyword id="KW-0449">Lipoprotein</keyword>
<keyword id="KW-0472">Membrane</keyword>
<keyword id="KW-0519">Myristate</keyword>
<keyword id="KW-0564">Palmitate</keyword>
<keyword id="KW-0611">Plant defense</keyword>
<keyword id="KW-1185">Reference proteome</keyword>
<keyword id="KW-0723">Serine/threonine-protein kinase</keyword>
<keyword id="KW-0808">Transferase</keyword>
<name>BKN2_ARATH</name>
<reference key="1">
    <citation type="journal article" date="2000" name="Nature">
        <title>Sequence and analysis of chromosome 5 of the plant Arabidopsis thaliana.</title>
        <authorList>
            <person name="Tabata S."/>
            <person name="Kaneko T."/>
            <person name="Nakamura Y."/>
            <person name="Kotani H."/>
            <person name="Kato T."/>
            <person name="Asamizu E."/>
            <person name="Miyajima N."/>
            <person name="Sasamoto S."/>
            <person name="Kimura T."/>
            <person name="Hosouchi T."/>
            <person name="Kawashima K."/>
            <person name="Kohara M."/>
            <person name="Matsumoto M."/>
            <person name="Matsuno A."/>
            <person name="Muraki A."/>
            <person name="Nakayama S."/>
            <person name="Nakazaki N."/>
            <person name="Naruo K."/>
            <person name="Okumura S."/>
            <person name="Shinpo S."/>
            <person name="Takeuchi C."/>
            <person name="Wada T."/>
            <person name="Watanabe A."/>
            <person name="Yamada M."/>
            <person name="Yasuda M."/>
            <person name="Sato S."/>
            <person name="de la Bastide M."/>
            <person name="Huang E."/>
            <person name="Spiegel L."/>
            <person name="Gnoj L."/>
            <person name="O'Shaughnessy A."/>
            <person name="Preston R."/>
            <person name="Habermann K."/>
            <person name="Murray J."/>
            <person name="Johnson D."/>
            <person name="Rohlfing T."/>
            <person name="Nelson J."/>
            <person name="Stoneking T."/>
            <person name="Pepin K."/>
            <person name="Spieth J."/>
            <person name="Sekhon M."/>
            <person name="Armstrong J."/>
            <person name="Becker M."/>
            <person name="Belter E."/>
            <person name="Cordum H."/>
            <person name="Cordes M."/>
            <person name="Courtney L."/>
            <person name="Courtney W."/>
            <person name="Dante M."/>
            <person name="Du H."/>
            <person name="Edwards J."/>
            <person name="Fryman J."/>
            <person name="Haakensen B."/>
            <person name="Lamar E."/>
            <person name="Latreille P."/>
            <person name="Leonard S."/>
            <person name="Meyer R."/>
            <person name="Mulvaney E."/>
            <person name="Ozersky P."/>
            <person name="Riley A."/>
            <person name="Strowmatt C."/>
            <person name="Wagner-McPherson C."/>
            <person name="Wollam A."/>
            <person name="Yoakum M."/>
            <person name="Bell M."/>
            <person name="Dedhia N."/>
            <person name="Parnell L."/>
            <person name="Shah R."/>
            <person name="Rodriguez M."/>
            <person name="Hoon See L."/>
            <person name="Vil D."/>
            <person name="Baker J."/>
            <person name="Kirchoff K."/>
            <person name="Toth K."/>
            <person name="King L."/>
            <person name="Bahret A."/>
            <person name="Miller B."/>
            <person name="Marra M.A."/>
            <person name="Martienssen R."/>
            <person name="McCombie W.R."/>
            <person name="Wilson R.K."/>
            <person name="Murphy G."/>
            <person name="Bancroft I."/>
            <person name="Volckaert G."/>
            <person name="Wambutt R."/>
            <person name="Duesterhoeft A."/>
            <person name="Stiekema W."/>
            <person name="Pohl T."/>
            <person name="Entian K.-D."/>
            <person name="Terryn N."/>
            <person name="Hartley N."/>
            <person name="Bent E."/>
            <person name="Johnson S."/>
            <person name="Langham S.-A."/>
            <person name="McCullagh B."/>
            <person name="Robben J."/>
            <person name="Grymonprez B."/>
            <person name="Zimmermann W."/>
            <person name="Ramsperger U."/>
            <person name="Wedler H."/>
            <person name="Balke K."/>
            <person name="Wedler E."/>
            <person name="Peters S."/>
            <person name="van Staveren M."/>
            <person name="Dirkse W."/>
            <person name="Mooijman P."/>
            <person name="Klein Lankhorst R."/>
            <person name="Weitzenegger T."/>
            <person name="Bothe G."/>
            <person name="Rose M."/>
            <person name="Hauf J."/>
            <person name="Berneiser S."/>
            <person name="Hempel S."/>
            <person name="Feldpausch M."/>
            <person name="Lamberth S."/>
            <person name="Villarroel R."/>
            <person name="Gielen J."/>
            <person name="Ardiles W."/>
            <person name="Bents O."/>
            <person name="Lemcke K."/>
            <person name="Kolesov G."/>
            <person name="Mayer K.F.X."/>
            <person name="Rudd S."/>
            <person name="Schoof H."/>
            <person name="Schueller C."/>
            <person name="Zaccaria P."/>
            <person name="Mewes H.-W."/>
            <person name="Bevan M."/>
            <person name="Fransz P.F."/>
        </authorList>
    </citation>
    <scope>NUCLEOTIDE SEQUENCE [LARGE SCALE GENOMIC DNA]</scope>
    <source>
        <strain>cv. Columbia</strain>
    </source>
</reference>
<reference key="2">
    <citation type="journal article" date="2017" name="Plant J.">
        <title>Araport11: a complete reannotation of the Arabidopsis thaliana reference genome.</title>
        <authorList>
            <person name="Cheng C.Y."/>
            <person name="Krishnakumar V."/>
            <person name="Chan A.P."/>
            <person name="Thibaud-Nissen F."/>
            <person name="Schobel S."/>
            <person name="Town C.D."/>
        </authorList>
    </citation>
    <scope>GENOME REANNOTATION</scope>
    <source>
        <strain>cv. Columbia</strain>
    </source>
</reference>
<reference key="3">
    <citation type="journal article" date="2019" name="BMC Plant Biol.">
        <title>Investigations into a putative role for the novel BRASSIKIN pseudokinases in compatible pollen-stigma interactions in Arabidopsis thaliana.</title>
        <authorList>
            <person name="Doucet J."/>
            <person name="Lee H.K."/>
            <person name="Udugama N."/>
            <person name="Xu J."/>
            <person name="Qi B."/>
            <person name="Goring D.R."/>
        </authorList>
    </citation>
    <scope>FUNCTION</scope>
    <scope>MUTAGENESIS OF GLY-2 AND CYS-4</scope>
    <scope>DISRUPTION PHENOTYPE</scope>
    <scope>TISSUE SPECIFICITY</scope>
    <scope>DEVELOPMENTAL STAGE</scope>
    <scope>SUBCELLULAR LOCATION</scope>
    <scope>MYRISTOYLATION AT GLY-2</scope>
    <scope>PALMITOYLATION AT CYS-4</scope>
    <source>
        <strain>cv. Columbia</strain>
    </source>
</reference>
<reference key="4">
    <citation type="journal article" date="2019" name="Mol. Plant">
        <title>Two Arabidopsis receptor-like cytoplasmic kinases SZE1 and SZE2 associate with the ZAR1-ZED1 complex and are required for effector-triggered immunity.</title>
        <authorList>
            <person name="Liu C."/>
            <person name="Cui D."/>
            <person name="Zhao J."/>
            <person name="Liu N."/>
            <person name="Wang B."/>
            <person name="Liu J."/>
            <person name="Xu E."/>
            <person name="Hu Z."/>
            <person name="Ren D."/>
            <person name="Tang D."/>
            <person name="Hu Y."/>
        </authorList>
    </citation>
    <scope>FUNCTION</scope>
    <scope>MUTAGENESIS OF GLY-2</scope>
    <scope>DISRUPTION PHENOTYPE</scope>
    <scope>SUBUNIT</scope>
    <scope>SUBCELLULAR LOCATION</scope>
    <scope>MYRISTOYLATION</scope>
    <scope>INTERACTION WITH ZAR1 AND PSEUDOMONAS SYRINGAE HOPZ1A</scope>
    <source>
        <strain>cv. Columbia</strain>
        <strain>cv. Landsberg erecta</strain>
    </source>
</reference>
<gene>
    <name evidence="6" type="primary">BKN2</name>
    <name evidence="5" type="synonym">SZE2</name>
    <name evidence="8" type="ordered locus">At5g11410</name>
    <name evidence="9" type="ORF">F2I11_300</name>
</gene>
<sequence length="336" mass="38399">MGNCLKPLKEQPPSASPKPLTIPSSSVEPVKENLKEFRFAELNKATKRFRKYMVIKGNDNGFTRTFYEGCINETTFAPSRTGITVSVMECYQDNSQTLQDWKEEVKSLGRISHPNLVKLLGYCCEENKSFLVFEYLHKGSLNRYIFGKEEEALPWETRVKIAIGAAQSIAFLHWVKNSALYRELRMYNILLDEHYNTKLFYLGSKKLCLLEESVTTAFIGRTVYIPPEYVISGHLGTKSDVYTFGVILLEILTGLKASDGKKNENMQSLHVWTKPFLSDQSKIREIIDPRLGNDYPVNAATQMGKLIKRCIKLDTRKRPSMQQVFDGLNDIAEIKD</sequence>
<comment type="function">
    <text evidence="3 4">Together with SZE1 and ZED1, required for effector-triggered immunity (e.g. Pseudomonas syringae type III effector HopZ1a) via the activation of ZAR1, thus being essential for resistance against P. syringae pv. tomato DC3000 expressing HopZ1a (PubMed:30947022). Collaboratively with BKN1, involved in compatible pollen-stigma interactions (PubMed:31829135).</text>
</comment>
<comment type="subunit">
    <text evidence="3">Component of an immune signaling complex made of, at least, SZE1, BKN2/SZE2, ZAR1 and ZED1 (PubMed:30947022). Interacts directly with ZAR1 and Pseudomonas syringae HOPZ1A at the plasma membrane (PubMed:30947022).</text>
</comment>
<comment type="subcellular location">
    <subcellularLocation>
        <location evidence="3 4">Cell membrane</location>
        <topology evidence="3 4">Lipid-anchor</topology>
        <orientation evidence="3">Cytoplasmic side</orientation>
    </subcellularLocation>
</comment>
<comment type="tissue specificity">
    <text evidence="4">Expressed in stigma and ovaries in flowers, and in stems and seedlings.</text>
</comment>
<comment type="developmental stage">
    <text evidence="4">In inflorescences, first observed in flower abscission zones and stems (PubMed:31829135). In seedlings, present at the leaf edges and petioles (PubMed:31829135).</text>
</comment>
<comment type="domain">
    <text evidence="1">The protein kinase domain is predicted to be catalytically inactive.</text>
</comment>
<comment type="PTM">
    <text evidence="3">N-terminal myristoylation is critical for plasma membrane localization and implication in defense responses.</text>
</comment>
<comment type="disruption phenotype">
    <text evidence="3 4">No visible phenotype (PubMed:31829135). Slight hydration defects of wild-type pollen placed on the stigma (PubMed:31829135). Slight hydration defects of wild-type pollen placed on the stigma of plants lacking both BKN1 and BKN2, but normal pollen grain adhesion and pollen tube growth (PubMed:31829135). Partial suppression of the pleiotropic phenotypes conferred by the dominant mutation zed1-D (e.g. high-temperature-dependent growth retardation and autoimmunity) (PubMed:30947022).</text>
</comment>
<comment type="similarity">
    <text evidence="7">Belongs to the protein kinase superfamily. Ser/Thr protein kinase family.</text>
</comment>
<accession>Q9LFL6</accession>
<protein>
    <recommendedName>
        <fullName evidence="7">Inactive serine/threonine-protein kinase BKN2</fullName>
    </recommendedName>
    <alternativeName>
        <fullName evidence="5">Protein SUPPRESSOR OF ZED1-D2</fullName>
    </alternativeName>
    <alternativeName>
        <fullName evidence="6">Pseudokinase BRASSIKIN 2</fullName>
    </alternativeName>
    <alternativeName>
        <fullName evidence="5">Receptor-like cytoplasmic kinase SZE2</fullName>
    </alternativeName>
</protein>
<evidence type="ECO:0000255" key="1">
    <source>
        <dbReference type="PROSITE-ProRule" id="PRU00159"/>
    </source>
</evidence>
<evidence type="ECO:0000256" key="2">
    <source>
        <dbReference type="SAM" id="MobiDB-lite"/>
    </source>
</evidence>
<evidence type="ECO:0000269" key="3">
    <source>
    </source>
</evidence>
<evidence type="ECO:0000269" key="4">
    <source>
    </source>
</evidence>
<evidence type="ECO:0000303" key="5">
    <source>
    </source>
</evidence>
<evidence type="ECO:0000303" key="6">
    <source>
    </source>
</evidence>
<evidence type="ECO:0000305" key="7"/>
<evidence type="ECO:0000312" key="8">
    <source>
        <dbReference type="Araport" id="AT5G11410"/>
    </source>
</evidence>
<evidence type="ECO:0000312" key="9">
    <source>
        <dbReference type="EMBL" id="CAB96676.1"/>
    </source>
</evidence>